<accession>B1X082</accession>
<evidence type="ECO:0000255" key="1">
    <source>
        <dbReference type="HAMAP-Rule" id="MF_00006"/>
    </source>
</evidence>
<reference key="1">
    <citation type="journal article" date="2008" name="Proc. Natl. Acad. Sci. U.S.A.">
        <title>The genome of Cyanothece 51142, a unicellular diazotrophic cyanobacterium important in the marine nitrogen cycle.</title>
        <authorList>
            <person name="Welsh E.A."/>
            <person name="Liberton M."/>
            <person name="Stoeckel J."/>
            <person name="Loh T."/>
            <person name="Elvitigala T."/>
            <person name="Wang C."/>
            <person name="Wollam A."/>
            <person name="Fulton R.S."/>
            <person name="Clifton S.W."/>
            <person name="Jacobs J.M."/>
            <person name="Aurora R."/>
            <person name="Ghosh B.K."/>
            <person name="Sherman L.A."/>
            <person name="Smith R.D."/>
            <person name="Wilson R.K."/>
            <person name="Pakrasi H.B."/>
        </authorList>
    </citation>
    <scope>NUCLEOTIDE SEQUENCE [LARGE SCALE GENOMIC DNA]</scope>
    <source>
        <strain>ATCC 51142 / BH68</strain>
    </source>
</reference>
<organism>
    <name type="scientific">Crocosphaera subtropica (strain ATCC 51142 / BH68)</name>
    <name type="common">Cyanothece sp. (strain ATCC 51142)</name>
    <dbReference type="NCBI Taxonomy" id="43989"/>
    <lineage>
        <taxon>Bacteria</taxon>
        <taxon>Bacillati</taxon>
        <taxon>Cyanobacteriota</taxon>
        <taxon>Cyanophyceae</taxon>
        <taxon>Oscillatoriophycideae</taxon>
        <taxon>Chroococcales</taxon>
        <taxon>Aphanothecaceae</taxon>
        <taxon>Crocosphaera</taxon>
        <taxon>Crocosphaera subtropica</taxon>
    </lineage>
</organism>
<feature type="chain" id="PRO_1000201693" description="Argininosuccinate lyase">
    <location>
        <begin position="1"/>
        <end position="464"/>
    </location>
</feature>
<name>ARLY_CROS5</name>
<comment type="catalytic activity">
    <reaction evidence="1">
        <text>2-(N(omega)-L-arginino)succinate = fumarate + L-arginine</text>
        <dbReference type="Rhea" id="RHEA:24020"/>
        <dbReference type="ChEBI" id="CHEBI:29806"/>
        <dbReference type="ChEBI" id="CHEBI:32682"/>
        <dbReference type="ChEBI" id="CHEBI:57472"/>
        <dbReference type="EC" id="4.3.2.1"/>
    </reaction>
</comment>
<comment type="pathway">
    <text evidence="1">Amino-acid biosynthesis; L-arginine biosynthesis; L-arginine from L-ornithine and carbamoyl phosphate: step 3/3.</text>
</comment>
<comment type="subcellular location">
    <subcellularLocation>
        <location evidence="1">Cytoplasm</location>
    </subcellularLocation>
</comment>
<comment type="similarity">
    <text evidence="1">Belongs to the lyase 1 family. Argininosuccinate lyase subfamily.</text>
</comment>
<protein>
    <recommendedName>
        <fullName evidence="1">Argininosuccinate lyase</fullName>
        <shortName evidence="1">ASAL</shortName>
        <ecNumber evidence="1">4.3.2.1</ecNumber>
    </recommendedName>
    <alternativeName>
        <fullName evidence="1">Arginosuccinase</fullName>
    </alternativeName>
</protein>
<gene>
    <name evidence="1" type="primary">argH</name>
    <name type="ordered locus">cce_0232</name>
</gene>
<sequence>MTVRQKKTWSDRFEGSLHPAIVEFNASITFDIELIEYDLTGSIAHAKMLAKTGIISEAEAQKLVNGLEQIRQEYRDGNFTPGIDQEDVHFAVERRLTELVGDVGKKLHTARSRNDQVGTDIRLYLRDQIQQIRSQIQAFQQVLLTHAQENVETLIPGYTHLQRAQPISLAHHLLAYFQMAQRDWERLGEIYQRTNVSPLGCGALAGTTFPIDRHYSAELLGFEEVYGNSLDGVSDRDFAIEFLNAASLIMVHLSRLSEEMILWASQEFGFISLTDSCATGSSIMPQKKNPDVPELVRGKAGRVFGHLQGMLVLMKGLPLAYNKDLQEDKEAIFDGVKTVKGCLEAMTVLLGEGITFRKERLSEAVAEDFSNATDVADYLAAKGVPFREAYNLVGKVVKTSLASGKLLKDLTLEEWQALHPNFEADIYDAIAPKQVVAARNSYGGTGFEQIYQAVERAKQQLELS</sequence>
<dbReference type="EC" id="4.3.2.1" evidence="1"/>
<dbReference type="EMBL" id="CP000806">
    <property type="protein sequence ID" value="ACB49583.1"/>
    <property type="molecule type" value="Genomic_DNA"/>
</dbReference>
<dbReference type="SMR" id="B1X082"/>
<dbReference type="STRING" id="43989.cce_0232"/>
<dbReference type="KEGG" id="cyt:cce_0232"/>
<dbReference type="eggNOG" id="COG0165">
    <property type="taxonomic scope" value="Bacteria"/>
</dbReference>
<dbReference type="HOGENOM" id="CLU_027272_2_3_3"/>
<dbReference type="UniPathway" id="UPA00068">
    <property type="reaction ID" value="UER00114"/>
</dbReference>
<dbReference type="Proteomes" id="UP000001203">
    <property type="component" value="Chromosome circular"/>
</dbReference>
<dbReference type="GO" id="GO:0005829">
    <property type="term" value="C:cytosol"/>
    <property type="evidence" value="ECO:0007669"/>
    <property type="project" value="TreeGrafter"/>
</dbReference>
<dbReference type="GO" id="GO:0004056">
    <property type="term" value="F:argininosuccinate lyase activity"/>
    <property type="evidence" value="ECO:0007669"/>
    <property type="project" value="UniProtKB-UniRule"/>
</dbReference>
<dbReference type="GO" id="GO:0042450">
    <property type="term" value="P:arginine biosynthetic process via ornithine"/>
    <property type="evidence" value="ECO:0007669"/>
    <property type="project" value="InterPro"/>
</dbReference>
<dbReference type="GO" id="GO:0006526">
    <property type="term" value="P:L-arginine biosynthetic process"/>
    <property type="evidence" value="ECO:0007669"/>
    <property type="project" value="UniProtKB-UniRule"/>
</dbReference>
<dbReference type="CDD" id="cd01359">
    <property type="entry name" value="Argininosuccinate_lyase"/>
    <property type="match status" value="1"/>
</dbReference>
<dbReference type="FunFam" id="1.10.275.10:FF:000002">
    <property type="entry name" value="Argininosuccinate lyase"/>
    <property type="match status" value="1"/>
</dbReference>
<dbReference type="FunFam" id="1.10.40.30:FF:000001">
    <property type="entry name" value="Argininosuccinate lyase"/>
    <property type="match status" value="1"/>
</dbReference>
<dbReference type="FunFam" id="1.20.200.10:FF:000015">
    <property type="entry name" value="argininosuccinate lyase isoform X2"/>
    <property type="match status" value="1"/>
</dbReference>
<dbReference type="Gene3D" id="1.10.40.30">
    <property type="entry name" value="Fumarase/aspartase (C-terminal domain)"/>
    <property type="match status" value="1"/>
</dbReference>
<dbReference type="Gene3D" id="1.20.200.10">
    <property type="entry name" value="Fumarase/aspartase (Central domain)"/>
    <property type="match status" value="1"/>
</dbReference>
<dbReference type="Gene3D" id="1.10.275.10">
    <property type="entry name" value="Fumarase/aspartase (N-terminal domain)"/>
    <property type="match status" value="1"/>
</dbReference>
<dbReference type="HAMAP" id="MF_00006">
    <property type="entry name" value="Arg_succ_lyase"/>
    <property type="match status" value="1"/>
</dbReference>
<dbReference type="InterPro" id="IPR029419">
    <property type="entry name" value="Arg_succ_lyase_C"/>
</dbReference>
<dbReference type="InterPro" id="IPR009049">
    <property type="entry name" value="Argininosuccinate_lyase"/>
</dbReference>
<dbReference type="InterPro" id="IPR024083">
    <property type="entry name" value="Fumarase/histidase_N"/>
</dbReference>
<dbReference type="InterPro" id="IPR020557">
    <property type="entry name" value="Fumarate_lyase_CS"/>
</dbReference>
<dbReference type="InterPro" id="IPR000362">
    <property type="entry name" value="Fumarate_lyase_fam"/>
</dbReference>
<dbReference type="InterPro" id="IPR022761">
    <property type="entry name" value="Fumarate_lyase_N"/>
</dbReference>
<dbReference type="InterPro" id="IPR008948">
    <property type="entry name" value="L-Aspartase-like"/>
</dbReference>
<dbReference type="NCBIfam" id="TIGR00838">
    <property type="entry name" value="argH"/>
    <property type="match status" value="1"/>
</dbReference>
<dbReference type="PANTHER" id="PTHR43814">
    <property type="entry name" value="ARGININOSUCCINATE LYASE"/>
    <property type="match status" value="1"/>
</dbReference>
<dbReference type="PANTHER" id="PTHR43814:SF1">
    <property type="entry name" value="ARGININOSUCCINATE LYASE"/>
    <property type="match status" value="1"/>
</dbReference>
<dbReference type="Pfam" id="PF14698">
    <property type="entry name" value="ASL_C2"/>
    <property type="match status" value="1"/>
</dbReference>
<dbReference type="Pfam" id="PF00206">
    <property type="entry name" value="Lyase_1"/>
    <property type="match status" value="1"/>
</dbReference>
<dbReference type="PRINTS" id="PR00145">
    <property type="entry name" value="ARGSUCLYASE"/>
</dbReference>
<dbReference type="PRINTS" id="PR00149">
    <property type="entry name" value="FUMRATELYASE"/>
</dbReference>
<dbReference type="SUPFAM" id="SSF48557">
    <property type="entry name" value="L-aspartase-like"/>
    <property type="match status" value="1"/>
</dbReference>
<dbReference type="PROSITE" id="PS00163">
    <property type="entry name" value="FUMARATE_LYASES"/>
    <property type="match status" value="1"/>
</dbReference>
<proteinExistence type="inferred from homology"/>
<keyword id="KW-0028">Amino-acid biosynthesis</keyword>
<keyword id="KW-0055">Arginine biosynthesis</keyword>
<keyword id="KW-0963">Cytoplasm</keyword>
<keyword id="KW-0456">Lyase</keyword>
<keyword id="KW-1185">Reference proteome</keyword>